<keyword id="KW-1064">Adaptive immunity</keyword>
<keyword id="KW-0903">Direct protein sequencing</keyword>
<keyword id="KW-0391">Immunity</keyword>
<keyword id="KW-1280">Immunoglobulin</keyword>
<keyword id="KW-1185">Reference proteome</keyword>
<accession>P01698</accession>
<proteinExistence type="evidence at protein level"/>
<reference key="1">
    <citation type="journal article" date="1976" name="Biochemistry">
        <title>Partial sequence of the variable region of an anti-p-azobenzoate antibody light chain: a one solvent sequenator program.</title>
        <authorList>
            <person name="Friedenson B."/>
            <person name="Hora J."/>
            <person name="Wang L.-S."/>
        </authorList>
    </citation>
    <scope>PROTEIN SEQUENCE</scope>
</reference>
<comment type="miscellaneous">
    <text>Residues 24, 53 and 56 were not positively identified.</text>
</comment>
<comment type="miscellaneous">
    <text>This chain was obtained from antibody to p-azobenzoate and was isolated from the serum of a single rabbit.</text>
</comment>
<name>KV17_RABIT</name>
<feature type="chain" id="PRO_0000059735" description="Ig kappa chain V region XP-1">
    <location>
        <begin position="1"/>
        <end position="104" status="greater than"/>
    </location>
</feature>
<feature type="region of interest" description="Framework-1">
    <location>
        <begin position="1"/>
        <end position="24"/>
    </location>
</feature>
<feature type="region of interest" description="Complementarity-determining-1">
    <location>
        <begin position="25"/>
        <end position="35"/>
    </location>
</feature>
<feature type="region of interest" description="Framework-2">
    <location>
        <begin position="36"/>
        <end position="49"/>
    </location>
</feature>
<feature type="region of interest" description="Complementarity-determining-2">
    <location>
        <begin position="50"/>
        <end position="56"/>
    </location>
</feature>
<feature type="region of interest" description="Framework-3">
    <location>
        <begin position="57"/>
        <end position="88"/>
    </location>
</feature>
<feature type="region of interest" description="Complementarity-determining-3">
    <location>
        <begin position="89"/>
        <end position="100"/>
    </location>
</feature>
<feature type="region of interest" description="Framework-4">
    <location>
        <begin position="101"/>
        <end position="104" status="greater than"/>
    </location>
</feature>
<feature type="non-terminal residue">
    <location>
        <position position="104"/>
    </location>
</feature>
<sequence>ADIVMTQTPASVSEPVGGTVTIKCQASQSIFBBLAWYQKPGZPPKGLLYTBYTLASGVSSRFSGGGSGTBFTLTISDLECABAATYYCEXTGVSZBXBKGFGGG</sequence>
<organism>
    <name type="scientific">Oryctolagus cuniculus</name>
    <name type="common">Rabbit</name>
    <dbReference type="NCBI Taxonomy" id="9986"/>
    <lineage>
        <taxon>Eukaryota</taxon>
        <taxon>Metazoa</taxon>
        <taxon>Chordata</taxon>
        <taxon>Craniata</taxon>
        <taxon>Vertebrata</taxon>
        <taxon>Euteleostomi</taxon>
        <taxon>Mammalia</taxon>
        <taxon>Eutheria</taxon>
        <taxon>Euarchontoglires</taxon>
        <taxon>Glires</taxon>
        <taxon>Lagomorpha</taxon>
        <taxon>Leporidae</taxon>
        <taxon>Oryctolagus</taxon>
    </lineage>
</organism>
<protein>
    <recommendedName>
        <fullName>Ig kappa chain V region XP-1</fullName>
    </recommendedName>
</protein>
<dbReference type="PIR" id="A01961">
    <property type="entry name" value="KVRBXP"/>
</dbReference>
<dbReference type="FunCoup" id="P01698">
    <property type="interactions" value="277"/>
</dbReference>
<dbReference type="InParanoid" id="P01698"/>
<dbReference type="Proteomes" id="UP000001811">
    <property type="component" value="Unplaced"/>
</dbReference>
<dbReference type="GO" id="GO:0019814">
    <property type="term" value="C:immunoglobulin complex"/>
    <property type="evidence" value="ECO:0007669"/>
    <property type="project" value="UniProtKB-KW"/>
</dbReference>
<dbReference type="GO" id="GO:0002250">
    <property type="term" value="P:adaptive immune response"/>
    <property type="evidence" value="ECO:0007669"/>
    <property type="project" value="UniProtKB-KW"/>
</dbReference>
<dbReference type="FunFam" id="2.60.40.10:FF:001230">
    <property type="entry name" value="Immunoglobulin kappa variable 8-16"/>
    <property type="match status" value="1"/>
</dbReference>
<dbReference type="Gene3D" id="2.60.40.10">
    <property type="entry name" value="Immunoglobulins"/>
    <property type="match status" value="1"/>
</dbReference>
<dbReference type="InterPro" id="IPR007110">
    <property type="entry name" value="Ig-like_dom"/>
</dbReference>
<dbReference type="InterPro" id="IPR036179">
    <property type="entry name" value="Ig-like_dom_sf"/>
</dbReference>
<dbReference type="InterPro" id="IPR013783">
    <property type="entry name" value="Ig-like_fold"/>
</dbReference>
<dbReference type="InterPro" id="IPR003599">
    <property type="entry name" value="Ig_sub"/>
</dbReference>
<dbReference type="InterPro" id="IPR013106">
    <property type="entry name" value="Ig_V-set"/>
</dbReference>
<dbReference type="InterPro" id="IPR050150">
    <property type="entry name" value="IgV_Light_Chain"/>
</dbReference>
<dbReference type="PANTHER" id="PTHR23267">
    <property type="entry name" value="IMMUNOGLOBULIN LIGHT CHAIN"/>
    <property type="match status" value="1"/>
</dbReference>
<dbReference type="Pfam" id="PF07686">
    <property type="entry name" value="V-set"/>
    <property type="match status" value="1"/>
</dbReference>
<dbReference type="SMART" id="SM00409">
    <property type="entry name" value="IG"/>
    <property type="match status" value="1"/>
</dbReference>
<dbReference type="SMART" id="SM00406">
    <property type="entry name" value="IGv"/>
    <property type="match status" value="1"/>
</dbReference>
<dbReference type="SUPFAM" id="SSF48726">
    <property type="entry name" value="Immunoglobulin"/>
    <property type="match status" value="1"/>
</dbReference>
<dbReference type="PROSITE" id="PS50835">
    <property type="entry name" value="IG_LIKE"/>
    <property type="match status" value="1"/>
</dbReference>